<reference key="1">
    <citation type="journal article" date="2011" name="PLoS Genet.">
        <title>The evolution of host specialization in the vertebrate gut symbiont Lactobacillus reuteri.</title>
        <authorList>
            <person name="Frese S.A."/>
            <person name="Benson A.K."/>
            <person name="Tannock G.W."/>
            <person name="Loach D.M."/>
            <person name="Kim J."/>
            <person name="Zhang M."/>
            <person name="Oh P.L."/>
            <person name="Heng N.C."/>
            <person name="Patil P.B."/>
            <person name="Juge N."/>
            <person name="Mackenzie D.A."/>
            <person name="Pearson B.M."/>
            <person name="Lapidus A."/>
            <person name="Dalin E."/>
            <person name="Tice H."/>
            <person name="Goltsman E."/>
            <person name="Land M."/>
            <person name="Hauser L."/>
            <person name="Ivanova N."/>
            <person name="Kyrpides N.C."/>
            <person name="Walter J."/>
        </authorList>
    </citation>
    <scope>NUCLEOTIDE SEQUENCE [LARGE SCALE GENOMIC DNA]</scope>
    <source>
        <strain>DSM 20016</strain>
    </source>
</reference>
<comment type="function">
    <text evidence="1">Hydrolyzes ribosome-free peptidyl-tRNAs (with 1 or more amino acids incorporated), which drop off the ribosome during protein synthesis, or as a result of ribosome stalling.</text>
</comment>
<comment type="function">
    <text evidence="1">Catalyzes the release of premature peptidyl moieties from peptidyl-tRNA molecules trapped in stalled 50S ribosomal subunits, and thus maintains levels of free tRNAs and 50S ribosomes.</text>
</comment>
<comment type="catalytic activity">
    <reaction evidence="1">
        <text>an N-acyl-L-alpha-aminoacyl-tRNA + H2O = an N-acyl-L-amino acid + a tRNA + H(+)</text>
        <dbReference type="Rhea" id="RHEA:54448"/>
        <dbReference type="Rhea" id="RHEA-COMP:10123"/>
        <dbReference type="Rhea" id="RHEA-COMP:13883"/>
        <dbReference type="ChEBI" id="CHEBI:15377"/>
        <dbReference type="ChEBI" id="CHEBI:15378"/>
        <dbReference type="ChEBI" id="CHEBI:59874"/>
        <dbReference type="ChEBI" id="CHEBI:78442"/>
        <dbReference type="ChEBI" id="CHEBI:138191"/>
        <dbReference type="EC" id="3.1.1.29"/>
    </reaction>
</comment>
<comment type="subunit">
    <text evidence="1">Monomer.</text>
</comment>
<comment type="subcellular location">
    <subcellularLocation>
        <location evidence="1">Cytoplasm</location>
    </subcellularLocation>
</comment>
<comment type="similarity">
    <text evidence="1">Belongs to the PTH family.</text>
</comment>
<accession>A5VI57</accession>
<keyword id="KW-0963">Cytoplasm</keyword>
<keyword id="KW-0378">Hydrolase</keyword>
<keyword id="KW-1185">Reference proteome</keyword>
<keyword id="KW-0694">RNA-binding</keyword>
<keyword id="KW-0820">tRNA-binding</keyword>
<protein>
    <recommendedName>
        <fullName evidence="1">Peptidyl-tRNA hydrolase</fullName>
        <shortName evidence="1">Pth</shortName>
        <ecNumber evidence="1">3.1.1.29</ecNumber>
    </recommendedName>
</protein>
<evidence type="ECO:0000255" key="1">
    <source>
        <dbReference type="HAMAP-Rule" id="MF_00083"/>
    </source>
</evidence>
<gene>
    <name evidence="1" type="primary">pth</name>
    <name type="ordered locus">Lreu_0261</name>
</gene>
<feature type="chain" id="PRO_1000057552" description="Peptidyl-tRNA hydrolase">
    <location>
        <begin position="1"/>
        <end position="186"/>
    </location>
</feature>
<feature type="active site" description="Proton acceptor" evidence="1">
    <location>
        <position position="19"/>
    </location>
</feature>
<feature type="binding site" evidence="1">
    <location>
        <position position="14"/>
    </location>
    <ligand>
        <name>tRNA</name>
        <dbReference type="ChEBI" id="CHEBI:17843"/>
    </ligand>
</feature>
<feature type="binding site" evidence="1">
    <location>
        <position position="65"/>
    </location>
    <ligand>
        <name>tRNA</name>
        <dbReference type="ChEBI" id="CHEBI:17843"/>
    </ligand>
</feature>
<feature type="binding site" evidence="1">
    <location>
        <position position="67"/>
    </location>
    <ligand>
        <name>tRNA</name>
        <dbReference type="ChEBI" id="CHEBI:17843"/>
    </ligand>
</feature>
<feature type="binding site" evidence="1">
    <location>
        <position position="113"/>
    </location>
    <ligand>
        <name>tRNA</name>
        <dbReference type="ChEBI" id="CHEBI:17843"/>
    </ligand>
</feature>
<feature type="site" description="Discriminates between blocked and unblocked aminoacyl-tRNA" evidence="1">
    <location>
        <position position="9"/>
    </location>
</feature>
<feature type="site" description="Stabilizes the basic form of H active site to accept a proton" evidence="1">
    <location>
        <position position="92"/>
    </location>
</feature>
<organism>
    <name type="scientific">Limosilactobacillus reuteri (strain DSM 20016)</name>
    <name type="common">Lactobacillus reuteri</name>
    <dbReference type="NCBI Taxonomy" id="557436"/>
    <lineage>
        <taxon>Bacteria</taxon>
        <taxon>Bacillati</taxon>
        <taxon>Bacillota</taxon>
        <taxon>Bacilli</taxon>
        <taxon>Lactobacillales</taxon>
        <taxon>Lactobacillaceae</taxon>
        <taxon>Limosilactobacillus</taxon>
    </lineage>
</organism>
<proteinExistence type="inferred from homology"/>
<name>PTH_LIMRD</name>
<sequence>MKMIVGLGNIGTRYDETRHNTGFMVVDQLARDYHLGAFTHLKQEAVAVSGVINGEKVMLVKPTTFMNDSGRAVGPLVDYYDIDLDDLVIVNDDLDMPVGKVRLKTHGASGGHNGLKSIISVLGTKNFNRVKVGIDHPQHGTVVSHVLGKFSKEERPKFDQAVEQAEHALEDWINGEDFAKLMNAYN</sequence>
<dbReference type="EC" id="3.1.1.29" evidence="1"/>
<dbReference type="EMBL" id="CP000705">
    <property type="protein sequence ID" value="ABQ82531.1"/>
    <property type="molecule type" value="Genomic_DNA"/>
</dbReference>
<dbReference type="RefSeq" id="WP_011953390.1">
    <property type="nucleotide sequence ID" value="NC_009513.1"/>
</dbReference>
<dbReference type="SMR" id="A5VI57"/>
<dbReference type="STRING" id="557436.Lreu_0261"/>
<dbReference type="KEGG" id="lre:Lreu_0261"/>
<dbReference type="PATRIC" id="fig|557436.17.peg.905"/>
<dbReference type="eggNOG" id="COG0193">
    <property type="taxonomic scope" value="Bacteria"/>
</dbReference>
<dbReference type="HOGENOM" id="CLU_062456_4_1_9"/>
<dbReference type="Proteomes" id="UP000001991">
    <property type="component" value="Chromosome"/>
</dbReference>
<dbReference type="GO" id="GO:0005737">
    <property type="term" value="C:cytoplasm"/>
    <property type="evidence" value="ECO:0007669"/>
    <property type="project" value="UniProtKB-SubCell"/>
</dbReference>
<dbReference type="GO" id="GO:0004045">
    <property type="term" value="F:peptidyl-tRNA hydrolase activity"/>
    <property type="evidence" value="ECO:0007669"/>
    <property type="project" value="UniProtKB-UniRule"/>
</dbReference>
<dbReference type="GO" id="GO:0000049">
    <property type="term" value="F:tRNA binding"/>
    <property type="evidence" value="ECO:0007669"/>
    <property type="project" value="UniProtKB-UniRule"/>
</dbReference>
<dbReference type="GO" id="GO:0006515">
    <property type="term" value="P:protein quality control for misfolded or incompletely synthesized proteins"/>
    <property type="evidence" value="ECO:0007669"/>
    <property type="project" value="UniProtKB-UniRule"/>
</dbReference>
<dbReference type="GO" id="GO:0072344">
    <property type="term" value="P:rescue of stalled ribosome"/>
    <property type="evidence" value="ECO:0007669"/>
    <property type="project" value="UniProtKB-UniRule"/>
</dbReference>
<dbReference type="CDD" id="cd00462">
    <property type="entry name" value="PTH"/>
    <property type="match status" value="1"/>
</dbReference>
<dbReference type="FunFam" id="3.40.50.1470:FF:000001">
    <property type="entry name" value="Peptidyl-tRNA hydrolase"/>
    <property type="match status" value="1"/>
</dbReference>
<dbReference type="Gene3D" id="3.40.50.1470">
    <property type="entry name" value="Peptidyl-tRNA hydrolase"/>
    <property type="match status" value="1"/>
</dbReference>
<dbReference type="HAMAP" id="MF_00083">
    <property type="entry name" value="Pept_tRNA_hydro_bact"/>
    <property type="match status" value="1"/>
</dbReference>
<dbReference type="InterPro" id="IPR001328">
    <property type="entry name" value="Pept_tRNA_hydro"/>
</dbReference>
<dbReference type="InterPro" id="IPR018171">
    <property type="entry name" value="Pept_tRNA_hydro_CS"/>
</dbReference>
<dbReference type="InterPro" id="IPR036416">
    <property type="entry name" value="Pept_tRNA_hydro_sf"/>
</dbReference>
<dbReference type="NCBIfam" id="TIGR00447">
    <property type="entry name" value="pth"/>
    <property type="match status" value="1"/>
</dbReference>
<dbReference type="PANTHER" id="PTHR17224">
    <property type="entry name" value="PEPTIDYL-TRNA HYDROLASE"/>
    <property type="match status" value="1"/>
</dbReference>
<dbReference type="PANTHER" id="PTHR17224:SF1">
    <property type="entry name" value="PEPTIDYL-TRNA HYDROLASE"/>
    <property type="match status" value="1"/>
</dbReference>
<dbReference type="Pfam" id="PF01195">
    <property type="entry name" value="Pept_tRNA_hydro"/>
    <property type="match status" value="1"/>
</dbReference>
<dbReference type="SUPFAM" id="SSF53178">
    <property type="entry name" value="Peptidyl-tRNA hydrolase-like"/>
    <property type="match status" value="1"/>
</dbReference>
<dbReference type="PROSITE" id="PS01195">
    <property type="entry name" value="PEPT_TRNA_HYDROL_1"/>
    <property type="match status" value="1"/>
</dbReference>